<gene>
    <name evidence="1" type="primary">rplS</name>
    <name evidence="1" type="synonym">rpl19</name>
    <name type="ordered locus">CYB_2889</name>
</gene>
<sequence>MNVRINAEEIIRSIEAAQMKPDLPEIRVGDQVRVGVRIQEGGKERVQAFEGTVIAMRHSGINRTITVRKVFQGIGVERVFLIHSPRIESIQVLRRGKVRRAKLFYLRDRVGKATRIKAKAESPDS</sequence>
<feature type="chain" id="PRO_0000252554" description="Large ribosomal subunit protein bL19">
    <location>
        <begin position="1"/>
        <end position="125"/>
    </location>
</feature>
<keyword id="KW-1185">Reference proteome</keyword>
<keyword id="KW-0687">Ribonucleoprotein</keyword>
<keyword id="KW-0689">Ribosomal protein</keyword>
<name>RL19_SYNJB</name>
<dbReference type="EMBL" id="CP000240">
    <property type="protein sequence ID" value="ABD03808.1"/>
    <property type="molecule type" value="Genomic_DNA"/>
</dbReference>
<dbReference type="SMR" id="Q2JHW3"/>
<dbReference type="STRING" id="321332.CYB_2889"/>
<dbReference type="KEGG" id="cyb:CYB_2889"/>
<dbReference type="eggNOG" id="COG0335">
    <property type="taxonomic scope" value="Bacteria"/>
</dbReference>
<dbReference type="HOGENOM" id="CLU_103507_2_0_3"/>
<dbReference type="Proteomes" id="UP000001938">
    <property type="component" value="Chromosome"/>
</dbReference>
<dbReference type="GO" id="GO:0022625">
    <property type="term" value="C:cytosolic large ribosomal subunit"/>
    <property type="evidence" value="ECO:0007669"/>
    <property type="project" value="TreeGrafter"/>
</dbReference>
<dbReference type="GO" id="GO:0003735">
    <property type="term" value="F:structural constituent of ribosome"/>
    <property type="evidence" value="ECO:0007669"/>
    <property type="project" value="InterPro"/>
</dbReference>
<dbReference type="GO" id="GO:0006412">
    <property type="term" value="P:translation"/>
    <property type="evidence" value="ECO:0007669"/>
    <property type="project" value="UniProtKB-UniRule"/>
</dbReference>
<dbReference type="FunFam" id="2.30.30.790:FF:000001">
    <property type="entry name" value="50S ribosomal protein L19"/>
    <property type="match status" value="1"/>
</dbReference>
<dbReference type="Gene3D" id="2.30.30.790">
    <property type="match status" value="1"/>
</dbReference>
<dbReference type="HAMAP" id="MF_00402">
    <property type="entry name" value="Ribosomal_bL19"/>
    <property type="match status" value="1"/>
</dbReference>
<dbReference type="InterPro" id="IPR001857">
    <property type="entry name" value="Ribosomal_bL19"/>
</dbReference>
<dbReference type="InterPro" id="IPR018257">
    <property type="entry name" value="Ribosomal_bL19_CS"/>
</dbReference>
<dbReference type="InterPro" id="IPR038657">
    <property type="entry name" value="Ribosomal_bL19_sf"/>
</dbReference>
<dbReference type="InterPro" id="IPR008991">
    <property type="entry name" value="Translation_prot_SH3-like_sf"/>
</dbReference>
<dbReference type="NCBIfam" id="TIGR01024">
    <property type="entry name" value="rplS_bact"/>
    <property type="match status" value="1"/>
</dbReference>
<dbReference type="PANTHER" id="PTHR15680:SF9">
    <property type="entry name" value="LARGE RIBOSOMAL SUBUNIT PROTEIN BL19M"/>
    <property type="match status" value="1"/>
</dbReference>
<dbReference type="PANTHER" id="PTHR15680">
    <property type="entry name" value="RIBOSOMAL PROTEIN L19"/>
    <property type="match status" value="1"/>
</dbReference>
<dbReference type="Pfam" id="PF01245">
    <property type="entry name" value="Ribosomal_L19"/>
    <property type="match status" value="1"/>
</dbReference>
<dbReference type="PIRSF" id="PIRSF002191">
    <property type="entry name" value="Ribosomal_L19"/>
    <property type="match status" value="1"/>
</dbReference>
<dbReference type="PRINTS" id="PR00061">
    <property type="entry name" value="RIBOSOMALL19"/>
</dbReference>
<dbReference type="SUPFAM" id="SSF50104">
    <property type="entry name" value="Translation proteins SH3-like domain"/>
    <property type="match status" value="1"/>
</dbReference>
<dbReference type="PROSITE" id="PS01015">
    <property type="entry name" value="RIBOSOMAL_L19"/>
    <property type="match status" value="1"/>
</dbReference>
<proteinExistence type="inferred from homology"/>
<reference key="1">
    <citation type="journal article" date="2007" name="ISME J.">
        <title>Population level functional diversity in a microbial community revealed by comparative genomic and metagenomic analyses.</title>
        <authorList>
            <person name="Bhaya D."/>
            <person name="Grossman A.R."/>
            <person name="Steunou A.-S."/>
            <person name="Khuri N."/>
            <person name="Cohan F.M."/>
            <person name="Hamamura N."/>
            <person name="Melendrez M.C."/>
            <person name="Bateson M.M."/>
            <person name="Ward D.M."/>
            <person name="Heidelberg J.F."/>
        </authorList>
    </citation>
    <scope>NUCLEOTIDE SEQUENCE [LARGE SCALE GENOMIC DNA]</scope>
    <source>
        <strain>JA-2-3B'a(2-13)</strain>
    </source>
</reference>
<organism>
    <name type="scientific">Synechococcus sp. (strain JA-2-3B'a(2-13))</name>
    <name type="common">Cyanobacteria bacterium Yellowstone B-Prime</name>
    <dbReference type="NCBI Taxonomy" id="321332"/>
    <lineage>
        <taxon>Bacteria</taxon>
        <taxon>Bacillati</taxon>
        <taxon>Cyanobacteriota</taxon>
        <taxon>Cyanophyceae</taxon>
        <taxon>Synechococcales</taxon>
        <taxon>Synechococcaceae</taxon>
        <taxon>Synechococcus</taxon>
    </lineage>
</organism>
<comment type="function">
    <text evidence="1">This protein is located at the 30S-50S ribosomal subunit interface and may play a role in the structure and function of the aminoacyl-tRNA binding site.</text>
</comment>
<comment type="similarity">
    <text evidence="1">Belongs to the bacterial ribosomal protein bL19 family.</text>
</comment>
<evidence type="ECO:0000255" key="1">
    <source>
        <dbReference type="HAMAP-Rule" id="MF_00402"/>
    </source>
</evidence>
<evidence type="ECO:0000305" key="2"/>
<accession>Q2JHW3</accession>
<protein>
    <recommendedName>
        <fullName evidence="1">Large ribosomal subunit protein bL19</fullName>
    </recommendedName>
    <alternativeName>
        <fullName evidence="2">50S ribosomal protein L19</fullName>
    </alternativeName>
</protein>